<feature type="chain" id="PRO_0000237751" description="2-C-methyl-D-erythritol 2,4-cyclodiphosphate synthase">
    <location>
        <begin position="1"/>
        <end position="159"/>
    </location>
</feature>
<feature type="binding site" evidence="1">
    <location>
        <begin position="8"/>
        <end position="10"/>
    </location>
    <ligand>
        <name>4-CDP-2-C-methyl-D-erythritol 2-phosphate</name>
        <dbReference type="ChEBI" id="CHEBI:57919"/>
    </ligand>
</feature>
<feature type="binding site" evidence="1">
    <location>
        <position position="8"/>
    </location>
    <ligand>
        <name>a divalent metal cation</name>
        <dbReference type="ChEBI" id="CHEBI:60240"/>
    </ligand>
</feature>
<feature type="binding site" evidence="1">
    <location>
        <position position="10"/>
    </location>
    <ligand>
        <name>a divalent metal cation</name>
        <dbReference type="ChEBI" id="CHEBI:60240"/>
    </ligand>
</feature>
<feature type="binding site" evidence="1">
    <location>
        <begin position="34"/>
        <end position="35"/>
    </location>
    <ligand>
        <name>4-CDP-2-C-methyl-D-erythritol 2-phosphate</name>
        <dbReference type="ChEBI" id="CHEBI:57919"/>
    </ligand>
</feature>
<feature type="binding site" evidence="1">
    <location>
        <position position="42"/>
    </location>
    <ligand>
        <name>a divalent metal cation</name>
        <dbReference type="ChEBI" id="CHEBI:60240"/>
    </ligand>
</feature>
<feature type="binding site" evidence="1">
    <location>
        <begin position="56"/>
        <end position="58"/>
    </location>
    <ligand>
        <name>4-CDP-2-C-methyl-D-erythritol 2-phosphate</name>
        <dbReference type="ChEBI" id="CHEBI:57919"/>
    </ligand>
</feature>
<feature type="binding site" evidence="1">
    <location>
        <begin position="61"/>
        <end position="65"/>
    </location>
    <ligand>
        <name>4-CDP-2-C-methyl-D-erythritol 2-phosphate</name>
        <dbReference type="ChEBI" id="CHEBI:57919"/>
    </ligand>
</feature>
<feature type="binding site" evidence="1">
    <location>
        <begin position="100"/>
        <end position="106"/>
    </location>
    <ligand>
        <name>4-CDP-2-C-methyl-D-erythritol 2-phosphate</name>
        <dbReference type="ChEBI" id="CHEBI:57919"/>
    </ligand>
</feature>
<feature type="binding site" evidence="1">
    <location>
        <begin position="132"/>
        <end position="135"/>
    </location>
    <ligand>
        <name>4-CDP-2-C-methyl-D-erythritol 2-phosphate</name>
        <dbReference type="ChEBI" id="CHEBI:57919"/>
    </ligand>
</feature>
<feature type="binding site" evidence="1">
    <location>
        <position position="139"/>
    </location>
    <ligand>
        <name>4-CDP-2-C-methyl-D-erythritol 2-phosphate</name>
        <dbReference type="ChEBI" id="CHEBI:57919"/>
    </ligand>
</feature>
<feature type="binding site" evidence="1">
    <location>
        <position position="142"/>
    </location>
    <ligand>
        <name>4-CDP-2-C-methyl-D-erythritol 2-phosphate</name>
        <dbReference type="ChEBI" id="CHEBI:57919"/>
    </ligand>
</feature>
<feature type="site" description="Transition state stabilizer" evidence="1">
    <location>
        <position position="34"/>
    </location>
</feature>
<feature type="site" description="Transition state stabilizer" evidence="1">
    <location>
        <position position="133"/>
    </location>
</feature>
<accession>Q5PEG2</accession>
<reference key="1">
    <citation type="journal article" date="2004" name="Nat. Genet.">
        <title>Comparison of genome degradation in Paratyphi A and Typhi, human-restricted serovars of Salmonella enterica that cause typhoid.</title>
        <authorList>
            <person name="McClelland M."/>
            <person name="Sanderson K.E."/>
            <person name="Clifton S.W."/>
            <person name="Latreille P."/>
            <person name="Porwollik S."/>
            <person name="Sabo A."/>
            <person name="Meyer R."/>
            <person name="Bieri T."/>
            <person name="Ozersky P."/>
            <person name="McLellan M."/>
            <person name="Harkins C.R."/>
            <person name="Wang C."/>
            <person name="Nguyen C."/>
            <person name="Berghoff A."/>
            <person name="Elliott G."/>
            <person name="Kohlberg S."/>
            <person name="Strong C."/>
            <person name="Du F."/>
            <person name="Carter J."/>
            <person name="Kremizki C."/>
            <person name="Layman D."/>
            <person name="Leonard S."/>
            <person name="Sun H."/>
            <person name="Fulton L."/>
            <person name="Nash W."/>
            <person name="Miner T."/>
            <person name="Minx P."/>
            <person name="Delehaunty K."/>
            <person name="Fronick C."/>
            <person name="Magrini V."/>
            <person name="Nhan M."/>
            <person name="Warren W."/>
            <person name="Florea L."/>
            <person name="Spieth J."/>
            <person name="Wilson R.K."/>
        </authorList>
    </citation>
    <scope>NUCLEOTIDE SEQUENCE [LARGE SCALE GENOMIC DNA]</scope>
    <source>
        <strain>ATCC 9150 / SARB42</strain>
    </source>
</reference>
<evidence type="ECO:0000255" key="1">
    <source>
        <dbReference type="HAMAP-Rule" id="MF_00107"/>
    </source>
</evidence>
<sequence>MRIGHGFDVHAFGGEGPIIIGGVRIPYEKGLLAHSDGDVALHALTDALLGAAALGDIGKLFPDTDPAFKGADSRELLREAWRRIQAKGYTLGNVDVTIIAQAPKMLPHIPQMRVFIAEDLGCHMDDVNVKATTTEKLGFTGRGEGIACEAVALLMKAAK</sequence>
<name>ISPF_SALPA</name>
<organism>
    <name type="scientific">Salmonella paratyphi A (strain ATCC 9150 / SARB42)</name>
    <dbReference type="NCBI Taxonomy" id="295319"/>
    <lineage>
        <taxon>Bacteria</taxon>
        <taxon>Pseudomonadati</taxon>
        <taxon>Pseudomonadota</taxon>
        <taxon>Gammaproteobacteria</taxon>
        <taxon>Enterobacterales</taxon>
        <taxon>Enterobacteriaceae</taxon>
        <taxon>Salmonella</taxon>
    </lineage>
</organism>
<dbReference type="EC" id="4.6.1.12" evidence="1"/>
<dbReference type="EMBL" id="CP000026">
    <property type="protein sequence ID" value="AAV78640.1"/>
    <property type="molecule type" value="Genomic_DNA"/>
</dbReference>
<dbReference type="RefSeq" id="WP_001219244.1">
    <property type="nucleotide sequence ID" value="NC_006511.1"/>
</dbReference>
<dbReference type="SMR" id="Q5PEG2"/>
<dbReference type="KEGG" id="spt:SPA2785"/>
<dbReference type="HOGENOM" id="CLU_084630_2_0_6"/>
<dbReference type="UniPathway" id="UPA00056">
    <property type="reaction ID" value="UER00095"/>
</dbReference>
<dbReference type="Proteomes" id="UP000008185">
    <property type="component" value="Chromosome"/>
</dbReference>
<dbReference type="GO" id="GO:0008685">
    <property type="term" value="F:2-C-methyl-D-erythritol 2,4-cyclodiphosphate synthase activity"/>
    <property type="evidence" value="ECO:0007669"/>
    <property type="project" value="UniProtKB-UniRule"/>
</dbReference>
<dbReference type="GO" id="GO:0046872">
    <property type="term" value="F:metal ion binding"/>
    <property type="evidence" value="ECO:0007669"/>
    <property type="project" value="UniProtKB-KW"/>
</dbReference>
<dbReference type="GO" id="GO:0019288">
    <property type="term" value="P:isopentenyl diphosphate biosynthetic process, methylerythritol 4-phosphate pathway"/>
    <property type="evidence" value="ECO:0007669"/>
    <property type="project" value="UniProtKB-UniRule"/>
</dbReference>
<dbReference type="GO" id="GO:0016114">
    <property type="term" value="P:terpenoid biosynthetic process"/>
    <property type="evidence" value="ECO:0007669"/>
    <property type="project" value="InterPro"/>
</dbReference>
<dbReference type="CDD" id="cd00554">
    <property type="entry name" value="MECDP_synthase"/>
    <property type="match status" value="1"/>
</dbReference>
<dbReference type="FunFam" id="3.30.1330.50:FF:000001">
    <property type="entry name" value="2-C-methyl-D-erythritol 2,4-cyclodiphosphate synthase"/>
    <property type="match status" value="1"/>
</dbReference>
<dbReference type="Gene3D" id="3.30.1330.50">
    <property type="entry name" value="2-C-methyl-D-erythritol 2,4-cyclodiphosphate synthase"/>
    <property type="match status" value="1"/>
</dbReference>
<dbReference type="HAMAP" id="MF_00107">
    <property type="entry name" value="IspF"/>
    <property type="match status" value="1"/>
</dbReference>
<dbReference type="InterPro" id="IPR003526">
    <property type="entry name" value="MECDP_synthase"/>
</dbReference>
<dbReference type="InterPro" id="IPR020555">
    <property type="entry name" value="MECDP_synthase_CS"/>
</dbReference>
<dbReference type="InterPro" id="IPR036571">
    <property type="entry name" value="MECDP_synthase_sf"/>
</dbReference>
<dbReference type="NCBIfam" id="TIGR00151">
    <property type="entry name" value="ispF"/>
    <property type="match status" value="1"/>
</dbReference>
<dbReference type="PANTHER" id="PTHR43181">
    <property type="entry name" value="2-C-METHYL-D-ERYTHRITOL 2,4-CYCLODIPHOSPHATE SYNTHASE, CHLOROPLASTIC"/>
    <property type="match status" value="1"/>
</dbReference>
<dbReference type="PANTHER" id="PTHR43181:SF1">
    <property type="entry name" value="2-C-METHYL-D-ERYTHRITOL 2,4-CYCLODIPHOSPHATE SYNTHASE, CHLOROPLASTIC"/>
    <property type="match status" value="1"/>
</dbReference>
<dbReference type="Pfam" id="PF02542">
    <property type="entry name" value="YgbB"/>
    <property type="match status" value="1"/>
</dbReference>
<dbReference type="SUPFAM" id="SSF69765">
    <property type="entry name" value="IpsF-like"/>
    <property type="match status" value="1"/>
</dbReference>
<dbReference type="PROSITE" id="PS01350">
    <property type="entry name" value="ISPF"/>
    <property type="match status" value="1"/>
</dbReference>
<gene>
    <name evidence="1" type="primary">ispF</name>
    <name type="ordered locus">SPA2785</name>
</gene>
<comment type="function">
    <text evidence="1">Involved in the biosynthesis of isopentenyl diphosphate (IPP) and dimethylallyl diphosphate (DMAPP), two major building blocks of isoprenoid compounds. Catalyzes the conversion of 4-diphosphocytidyl-2-C-methyl-D-erythritol 2-phosphate (CDP-ME2P) to 2-C-methyl-D-erythritol 2,4-cyclodiphosphate (ME-CPP) with a corresponding release of cytidine 5-monophosphate (CMP).</text>
</comment>
<comment type="catalytic activity">
    <reaction evidence="1">
        <text>4-CDP-2-C-methyl-D-erythritol 2-phosphate = 2-C-methyl-D-erythritol 2,4-cyclic diphosphate + CMP</text>
        <dbReference type="Rhea" id="RHEA:23864"/>
        <dbReference type="ChEBI" id="CHEBI:57919"/>
        <dbReference type="ChEBI" id="CHEBI:58483"/>
        <dbReference type="ChEBI" id="CHEBI:60377"/>
        <dbReference type="EC" id="4.6.1.12"/>
    </reaction>
</comment>
<comment type="cofactor">
    <cofactor evidence="1">
        <name>a divalent metal cation</name>
        <dbReference type="ChEBI" id="CHEBI:60240"/>
    </cofactor>
    <text evidence="1">Binds 1 divalent metal cation per subunit.</text>
</comment>
<comment type="pathway">
    <text evidence="1">Isoprenoid biosynthesis; isopentenyl diphosphate biosynthesis via DXP pathway; isopentenyl diphosphate from 1-deoxy-D-xylulose 5-phosphate: step 4/6.</text>
</comment>
<comment type="subunit">
    <text evidence="1">Homotrimer.</text>
</comment>
<comment type="similarity">
    <text evidence="1">Belongs to the IspF family.</text>
</comment>
<proteinExistence type="inferred from homology"/>
<keyword id="KW-0414">Isoprene biosynthesis</keyword>
<keyword id="KW-0456">Lyase</keyword>
<keyword id="KW-0479">Metal-binding</keyword>
<protein>
    <recommendedName>
        <fullName evidence="1">2-C-methyl-D-erythritol 2,4-cyclodiphosphate synthase</fullName>
        <shortName evidence="1">MECDP-synthase</shortName>
        <shortName evidence="1">MECPP-synthase</shortName>
        <shortName evidence="1">MECPS</shortName>
        <ecNumber evidence="1">4.6.1.12</ecNumber>
    </recommendedName>
</protein>